<name>GCSPB_STAAB</name>
<accession>Q2YSZ4</accession>
<feature type="chain" id="PRO_1000045705" description="Probable glycine dehydrogenase (decarboxylating) subunit 2">
    <location>
        <begin position="1"/>
        <end position="490"/>
    </location>
</feature>
<feature type="modified residue" description="N6-(pyridoxal phosphate)lysine" evidence="1">
    <location>
        <position position="273"/>
    </location>
</feature>
<evidence type="ECO:0000255" key="1">
    <source>
        <dbReference type="HAMAP-Rule" id="MF_00713"/>
    </source>
</evidence>
<keyword id="KW-0560">Oxidoreductase</keyword>
<keyword id="KW-0663">Pyridoxal phosphate</keyword>
<proteinExistence type="inferred from homology"/>
<comment type="function">
    <text evidence="1">The glycine cleavage system catalyzes the degradation of glycine. The P protein binds the alpha-amino group of glycine through its pyridoxal phosphate cofactor; CO(2) is released and the remaining methylamine moiety is then transferred to the lipoamide cofactor of the H protein.</text>
</comment>
<comment type="catalytic activity">
    <reaction evidence="1">
        <text>N(6)-[(R)-lipoyl]-L-lysyl-[glycine-cleavage complex H protein] + glycine + H(+) = N(6)-[(R)-S(8)-aminomethyldihydrolipoyl]-L-lysyl-[glycine-cleavage complex H protein] + CO2</text>
        <dbReference type="Rhea" id="RHEA:24304"/>
        <dbReference type="Rhea" id="RHEA-COMP:10494"/>
        <dbReference type="Rhea" id="RHEA-COMP:10495"/>
        <dbReference type="ChEBI" id="CHEBI:15378"/>
        <dbReference type="ChEBI" id="CHEBI:16526"/>
        <dbReference type="ChEBI" id="CHEBI:57305"/>
        <dbReference type="ChEBI" id="CHEBI:83099"/>
        <dbReference type="ChEBI" id="CHEBI:83143"/>
        <dbReference type="EC" id="1.4.4.2"/>
    </reaction>
</comment>
<comment type="cofactor">
    <cofactor evidence="1">
        <name>pyridoxal 5'-phosphate</name>
        <dbReference type="ChEBI" id="CHEBI:597326"/>
    </cofactor>
</comment>
<comment type="subunit">
    <text evidence="1">The glycine cleavage system is composed of four proteins: P, T, L and H. In this organism, the P 'protein' is a heterodimer of two subunits.</text>
</comment>
<comment type="similarity">
    <text evidence="1">Belongs to the GcvP family. C-terminal subunit subfamily.</text>
</comment>
<organism>
    <name type="scientific">Staphylococcus aureus (strain bovine RF122 / ET3-1)</name>
    <dbReference type="NCBI Taxonomy" id="273036"/>
    <lineage>
        <taxon>Bacteria</taxon>
        <taxon>Bacillati</taxon>
        <taxon>Bacillota</taxon>
        <taxon>Bacilli</taxon>
        <taxon>Bacillales</taxon>
        <taxon>Staphylococcaceae</taxon>
        <taxon>Staphylococcus</taxon>
    </lineage>
</organism>
<protein>
    <recommendedName>
        <fullName evidence="1">Probable glycine dehydrogenase (decarboxylating) subunit 2</fullName>
        <ecNumber evidence="1">1.4.4.2</ecNumber>
    </recommendedName>
    <alternativeName>
        <fullName evidence="1">Glycine cleavage system P-protein subunit 2</fullName>
    </alternativeName>
    <alternativeName>
        <fullName evidence="1">Glycine decarboxylase subunit 2</fullName>
    </alternativeName>
    <alternativeName>
        <fullName evidence="1">Glycine dehydrogenase (aminomethyl-transferring) subunit 2</fullName>
    </alternativeName>
</protein>
<reference key="1">
    <citation type="journal article" date="2007" name="PLoS ONE">
        <title>Molecular correlates of host specialization in Staphylococcus aureus.</title>
        <authorList>
            <person name="Herron-Olson L."/>
            <person name="Fitzgerald J.R."/>
            <person name="Musser J.M."/>
            <person name="Kapur V."/>
        </authorList>
    </citation>
    <scope>NUCLEOTIDE SEQUENCE [LARGE SCALE GENOMIC DNA]</scope>
    <source>
        <strain>bovine RF122 / ET3-1</strain>
    </source>
</reference>
<dbReference type="EC" id="1.4.4.2" evidence="1"/>
<dbReference type="EMBL" id="AJ938182">
    <property type="protein sequence ID" value="CAI81096.1"/>
    <property type="molecule type" value="Genomic_DNA"/>
</dbReference>
<dbReference type="RefSeq" id="WP_000202182.1">
    <property type="nucleotide sequence ID" value="NC_007622.1"/>
</dbReference>
<dbReference type="SMR" id="Q2YSZ4"/>
<dbReference type="KEGG" id="sab:SAB1407c"/>
<dbReference type="HOGENOM" id="CLU_004620_5_0_9"/>
<dbReference type="GO" id="GO:0005829">
    <property type="term" value="C:cytosol"/>
    <property type="evidence" value="ECO:0007669"/>
    <property type="project" value="TreeGrafter"/>
</dbReference>
<dbReference type="GO" id="GO:0005960">
    <property type="term" value="C:glycine cleavage complex"/>
    <property type="evidence" value="ECO:0007669"/>
    <property type="project" value="TreeGrafter"/>
</dbReference>
<dbReference type="GO" id="GO:0016594">
    <property type="term" value="F:glycine binding"/>
    <property type="evidence" value="ECO:0007669"/>
    <property type="project" value="TreeGrafter"/>
</dbReference>
<dbReference type="GO" id="GO:0004375">
    <property type="term" value="F:glycine dehydrogenase (decarboxylating) activity"/>
    <property type="evidence" value="ECO:0007669"/>
    <property type="project" value="UniProtKB-EC"/>
</dbReference>
<dbReference type="GO" id="GO:0030170">
    <property type="term" value="F:pyridoxal phosphate binding"/>
    <property type="evidence" value="ECO:0007669"/>
    <property type="project" value="TreeGrafter"/>
</dbReference>
<dbReference type="GO" id="GO:0019464">
    <property type="term" value="P:glycine decarboxylation via glycine cleavage system"/>
    <property type="evidence" value="ECO:0007669"/>
    <property type="project" value="UniProtKB-UniRule"/>
</dbReference>
<dbReference type="CDD" id="cd00613">
    <property type="entry name" value="GDC-P"/>
    <property type="match status" value="1"/>
</dbReference>
<dbReference type="FunFam" id="3.40.640.10:FF:000034">
    <property type="entry name" value="Probable glycine dehydrogenase (decarboxylating) subunit 2"/>
    <property type="match status" value="1"/>
</dbReference>
<dbReference type="FunFam" id="3.90.1150.10:FF:000014">
    <property type="entry name" value="Probable glycine dehydrogenase (decarboxylating) subunit 2"/>
    <property type="match status" value="1"/>
</dbReference>
<dbReference type="Gene3D" id="6.20.440.10">
    <property type="match status" value="1"/>
</dbReference>
<dbReference type="Gene3D" id="3.90.1150.10">
    <property type="entry name" value="Aspartate Aminotransferase, domain 1"/>
    <property type="match status" value="1"/>
</dbReference>
<dbReference type="Gene3D" id="3.40.640.10">
    <property type="entry name" value="Type I PLP-dependent aspartate aminotransferase-like (Major domain)"/>
    <property type="match status" value="1"/>
</dbReference>
<dbReference type="HAMAP" id="MF_00713">
    <property type="entry name" value="GcvPB"/>
    <property type="match status" value="1"/>
</dbReference>
<dbReference type="InterPro" id="IPR000192">
    <property type="entry name" value="Aminotrans_V_dom"/>
</dbReference>
<dbReference type="InterPro" id="IPR023012">
    <property type="entry name" value="GcvPB"/>
</dbReference>
<dbReference type="InterPro" id="IPR049316">
    <property type="entry name" value="GDC-P_C"/>
</dbReference>
<dbReference type="InterPro" id="IPR020581">
    <property type="entry name" value="GDC_P"/>
</dbReference>
<dbReference type="InterPro" id="IPR015424">
    <property type="entry name" value="PyrdxlP-dep_Trfase"/>
</dbReference>
<dbReference type="InterPro" id="IPR015421">
    <property type="entry name" value="PyrdxlP-dep_Trfase_major"/>
</dbReference>
<dbReference type="InterPro" id="IPR015422">
    <property type="entry name" value="PyrdxlP-dep_Trfase_small"/>
</dbReference>
<dbReference type="NCBIfam" id="NF003346">
    <property type="entry name" value="PRK04366.1"/>
    <property type="match status" value="1"/>
</dbReference>
<dbReference type="PANTHER" id="PTHR11773:SF1">
    <property type="entry name" value="GLYCINE DEHYDROGENASE (DECARBOXYLATING), MITOCHONDRIAL"/>
    <property type="match status" value="1"/>
</dbReference>
<dbReference type="PANTHER" id="PTHR11773">
    <property type="entry name" value="GLYCINE DEHYDROGENASE, DECARBOXYLATING"/>
    <property type="match status" value="1"/>
</dbReference>
<dbReference type="Pfam" id="PF00266">
    <property type="entry name" value="Aminotran_5"/>
    <property type="match status" value="1"/>
</dbReference>
<dbReference type="Pfam" id="PF21478">
    <property type="entry name" value="GcvP2_C"/>
    <property type="match status" value="1"/>
</dbReference>
<dbReference type="SUPFAM" id="SSF53383">
    <property type="entry name" value="PLP-dependent transferases"/>
    <property type="match status" value="1"/>
</dbReference>
<sequence length="490" mass="54769">MTSKSSPLIFERSREGRYAYSLPISDIKTNSVESLLDDKFIRKNKAEFPEVAELDLVRHYTELSNKNFGVDNGFYPLGSCTMKYNPKINEKVARIPGFSESHPLQDEDQVQGSLEIIYSLQEELKEITGMDEVTLQPAAGAHGEWTALMIFKAYHENNGEGHRDEVIVPDSAHGTNPASASFAGFKSVTVKSNERGEVDIDDLKRVVNENTAAIMLTNPNTLGIFEKNIMEIREIVHNAGGLLYYDGANLNAIMDKVRPGDMGFDAVHLNLHKTFTGPHGGGGPGSGPVGVVKELASYLPKPMVIKDGDTFKYDNDIKNSIGRVKPFYGNFGIYLRAYTYIRTMGATGLKEVSEVAVLNANYIKARLSEHFEIPYKQYCKHEFVLSGVRQKEFGVRTLDMAKRLLDFGVHPPTIYFPLNVEEGMMIEPTETESKETLDYFIDTLISIAEEAKNDPDKVLEAPHTTVIDRLDEATAARKPILKFENLKQEK</sequence>
<gene>
    <name evidence="1" type="primary">gcvPB</name>
    <name type="ordered locus">SAB1407c</name>
</gene>